<evidence type="ECO:0000250" key="1">
    <source>
        <dbReference type="UniProtKB" id="P46777"/>
    </source>
</evidence>
<evidence type="ECO:0000256" key="2">
    <source>
        <dbReference type="SAM" id="MobiDB-lite"/>
    </source>
</evidence>
<evidence type="ECO:0000305" key="3"/>
<keyword id="KW-0963">Cytoplasm</keyword>
<keyword id="KW-0539">Nucleus</keyword>
<keyword id="KW-1185">Reference proteome</keyword>
<keyword id="KW-0687">Ribonucleoprotein</keyword>
<keyword id="KW-0689">Ribosomal protein</keyword>
<keyword id="KW-0694">RNA-binding</keyword>
<keyword id="KW-0699">rRNA-binding</keyword>
<protein>
    <recommendedName>
        <fullName evidence="3">Large ribosomal subunit protein uL18B</fullName>
    </recommendedName>
    <alternativeName>
        <fullName>60S ribosomal protein L5-B</fullName>
    </alternativeName>
</protein>
<sequence length="296" mass="34075">MGFVKVVKNKAYFKRYQVKFRRRREGKTDYYARKRLVIQDKNKYNTPKYRMIVRVTNRDIICQIAYARIEGDMIVCAAYAHELPKYGVKVGLTNYAAAYCTGLLLARRLLNKFGLDKVYEGQVEVTGDEYNVESVDGEPGAFTCYLDAGLTRTTTGNKVFGALKGAVDGGLSIPHSTKRFPGYDSESKEFNPEVHRKHIFAQNIAEYMRLLMEEDEDAYKKQFSQYIKNGVAADQLEDIYKKAHAGIRENPVHEKKPKKEVKKKRWNRAKLSLEQKKDRVAQKKASFLRAQEKADS</sequence>
<name>RL5B_XENLA</name>
<accession>P15126</accession>
<gene>
    <name type="primary">rpl5-b</name>
</gene>
<organism>
    <name type="scientific">Xenopus laevis</name>
    <name type="common">African clawed frog</name>
    <dbReference type="NCBI Taxonomy" id="8355"/>
    <lineage>
        <taxon>Eukaryota</taxon>
        <taxon>Metazoa</taxon>
        <taxon>Chordata</taxon>
        <taxon>Craniata</taxon>
        <taxon>Vertebrata</taxon>
        <taxon>Euteleostomi</taxon>
        <taxon>Amphibia</taxon>
        <taxon>Batrachia</taxon>
        <taxon>Anura</taxon>
        <taxon>Pipoidea</taxon>
        <taxon>Pipidae</taxon>
        <taxon>Xenopodinae</taxon>
        <taxon>Xenopus</taxon>
        <taxon>Xenopus</taxon>
    </lineage>
</organism>
<proteinExistence type="evidence at transcript level"/>
<reference key="1">
    <citation type="journal article" date="1989" name="Mol. Cell. Biol.">
        <title>Developmental expression and 5S rRNA-binding activity of Xenopus laevis ribosomal protein L5.</title>
        <authorList>
            <person name="Wormington W.M."/>
        </authorList>
    </citation>
    <scope>NUCLEOTIDE SEQUENCE [MRNA]</scope>
</reference>
<feature type="initiator methionine" description="Removed" evidence="1">
    <location>
        <position position="1"/>
    </location>
</feature>
<feature type="chain" id="PRO_0000131439" description="Large ribosomal subunit protein uL18B">
    <location>
        <begin position="2"/>
        <end position="296"/>
    </location>
</feature>
<feature type="region of interest" description="Disordered" evidence="2">
    <location>
        <begin position="251"/>
        <end position="296"/>
    </location>
</feature>
<feature type="compositionally biased region" description="Basic residues" evidence="2">
    <location>
        <begin position="255"/>
        <end position="268"/>
    </location>
</feature>
<feature type="compositionally biased region" description="Basic and acidic residues" evidence="2">
    <location>
        <begin position="271"/>
        <end position="281"/>
    </location>
</feature>
<comment type="function">
    <text evidence="1">Component of the ribosome, a large ribonucleoprotein complex responsible for the synthesis of proteins in the cell. The small ribosomal subunit (SSU) binds messenger RNAs (mRNAs) and translates the encoded message by selecting cognate aminoacyl-transfer RNA (tRNA) molecules. The large subunit (LSU) contains the ribosomal catalytic site termed the peptidyl transferase center (PTC), which catalyzes the formation of peptide bonds, thereby polymerizing the amino acids delivered by tRNAs into a polypeptide chain. The nascent polypeptides leave the ribosome through a tunnel in the LSU and interact with protein factors that function in enzymatic processing, targeting, and the membrane insertion of nascent chains at the exit of the ribosomal tunnel. As part of the 5S RNP/5S ribonucleoprotein particle it is an essential component of the LSU, required for its formation and the maturation of rRNAs. It also couples ribosome biogenesis to p53/TP53 activation. As part of the 5S RNP it accumulates in the nucleoplasm and inhibits MDM2, when ribosome biogenesis is perturbed, mediating the stabilization and the activation of TP53.</text>
</comment>
<comment type="subunit">
    <text evidence="1">Component of the large ribosomal subunit (LSU). Part of a LSU subcomplex, the 5S RNP which is composed of the 5S RNA, RPL5 and RPL11.</text>
</comment>
<comment type="subcellular location">
    <subcellularLocation>
        <location evidence="1">Cytoplasm</location>
    </subcellularLocation>
    <subcellularLocation>
        <location evidence="1">Nucleus</location>
        <location evidence="1">Nucleolus</location>
    </subcellularLocation>
</comment>
<comment type="similarity">
    <text evidence="3">Belongs to the universal ribosomal protein uL18 family.</text>
</comment>
<dbReference type="EMBL" id="M29033">
    <property type="protein sequence ID" value="AAA49939.1"/>
    <property type="molecule type" value="mRNA"/>
</dbReference>
<dbReference type="PIR" id="B33823">
    <property type="entry name" value="B33823"/>
</dbReference>
<dbReference type="SMR" id="P15126"/>
<dbReference type="AGR" id="Xenbase:XB-GENE-983917"/>
<dbReference type="Xenbase" id="XB-GENE-983917">
    <property type="gene designation" value="rpl5.L"/>
</dbReference>
<dbReference type="Proteomes" id="UP000186698">
    <property type="component" value="Unplaced"/>
</dbReference>
<dbReference type="GO" id="GO:0022625">
    <property type="term" value="C:cytosolic large ribosomal subunit"/>
    <property type="evidence" value="ECO:0007669"/>
    <property type="project" value="TreeGrafter"/>
</dbReference>
<dbReference type="GO" id="GO:0005730">
    <property type="term" value="C:nucleolus"/>
    <property type="evidence" value="ECO:0007669"/>
    <property type="project" value="UniProtKB-SubCell"/>
</dbReference>
<dbReference type="GO" id="GO:0008097">
    <property type="term" value="F:5S rRNA binding"/>
    <property type="evidence" value="ECO:0007669"/>
    <property type="project" value="InterPro"/>
</dbReference>
<dbReference type="GO" id="GO:0003735">
    <property type="term" value="F:structural constituent of ribosome"/>
    <property type="evidence" value="ECO:0007669"/>
    <property type="project" value="InterPro"/>
</dbReference>
<dbReference type="GO" id="GO:0000027">
    <property type="term" value="P:ribosomal large subunit assembly"/>
    <property type="evidence" value="ECO:0007669"/>
    <property type="project" value="TreeGrafter"/>
</dbReference>
<dbReference type="GO" id="GO:0006412">
    <property type="term" value="P:translation"/>
    <property type="evidence" value="ECO:0007669"/>
    <property type="project" value="InterPro"/>
</dbReference>
<dbReference type="CDD" id="cd00432">
    <property type="entry name" value="Ribosomal_L18_L5e"/>
    <property type="match status" value="1"/>
</dbReference>
<dbReference type="FunFam" id="3.30.420.100:FF:000011">
    <property type="entry name" value="60S ribosomal protein L5"/>
    <property type="match status" value="1"/>
</dbReference>
<dbReference type="FunFam" id="3.30.420.100:FF:000013">
    <property type="entry name" value="60S ribosomal protein L5 isoform X2"/>
    <property type="match status" value="1"/>
</dbReference>
<dbReference type="Gene3D" id="3.30.420.100">
    <property type="match status" value="1"/>
</dbReference>
<dbReference type="HAMAP" id="MF_01337_A">
    <property type="entry name" value="Ribosomal_uL18_A"/>
    <property type="match status" value="1"/>
</dbReference>
<dbReference type="InterPro" id="IPR005485">
    <property type="entry name" value="Rbsml_uL18_euk"/>
</dbReference>
<dbReference type="InterPro" id="IPR025607">
    <property type="entry name" value="Ribosomal_uL18_C_euk"/>
</dbReference>
<dbReference type="PANTHER" id="PTHR23410:SF12">
    <property type="entry name" value="LARGE RIBOSOMAL SUBUNIT PROTEIN UL18"/>
    <property type="match status" value="1"/>
</dbReference>
<dbReference type="PANTHER" id="PTHR23410">
    <property type="entry name" value="RIBOSOMAL PROTEIN L5-RELATED"/>
    <property type="match status" value="1"/>
</dbReference>
<dbReference type="Pfam" id="PF14204">
    <property type="entry name" value="Ribosomal_L18_c"/>
    <property type="match status" value="1"/>
</dbReference>
<dbReference type="Pfam" id="PF17144">
    <property type="entry name" value="Ribosomal_L5e"/>
    <property type="match status" value="1"/>
</dbReference>
<dbReference type="PRINTS" id="PR00058">
    <property type="entry name" value="RIBOSOMALL5"/>
</dbReference>
<dbReference type="SUPFAM" id="SSF53137">
    <property type="entry name" value="Translational machinery components"/>
    <property type="match status" value="1"/>
</dbReference>